<name>SGS3_MAIZE</name>
<dbReference type="EMBL" id="DQ832257">
    <property type="protein sequence ID" value="ABH10613.1"/>
    <property type="molecule type" value="mRNA"/>
</dbReference>
<dbReference type="RefSeq" id="NP_001105989.1">
    <property type="nucleotide sequence ID" value="NM_001112519.1"/>
</dbReference>
<dbReference type="SMR" id="A1Y2B7"/>
<dbReference type="FunCoup" id="A1Y2B7">
    <property type="interactions" value="1842"/>
</dbReference>
<dbReference type="STRING" id="4577.A1Y2B7"/>
<dbReference type="PaxDb" id="4577-GRMZM2G020187_P01"/>
<dbReference type="EnsemblPlants" id="Zm00001eb264310_T001">
    <property type="protein sequence ID" value="Zm00001eb264310_P001"/>
    <property type="gene ID" value="Zm00001eb264310"/>
</dbReference>
<dbReference type="GeneID" id="100037819"/>
<dbReference type="Gramene" id="Zm00001eb264310_T001">
    <property type="protein sequence ID" value="Zm00001eb264310_P001"/>
    <property type="gene ID" value="Zm00001eb264310"/>
</dbReference>
<dbReference type="KEGG" id="zma:100037819"/>
<dbReference type="MaizeGDB" id="12602"/>
<dbReference type="eggNOG" id="ENOG502QPU5">
    <property type="taxonomic scope" value="Eukaryota"/>
</dbReference>
<dbReference type="HOGENOM" id="CLU_020338_1_0_1"/>
<dbReference type="InParanoid" id="A1Y2B7"/>
<dbReference type="OMA" id="DWYNLQP"/>
<dbReference type="OrthoDB" id="1936239at2759"/>
<dbReference type="Proteomes" id="UP000007305">
    <property type="component" value="Chromosome 6"/>
</dbReference>
<dbReference type="ExpressionAtlas" id="A1Y2B7">
    <property type="expression patterns" value="baseline and differential"/>
</dbReference>
<dbReference type="GO" id="GO:0051607">
    <property type="term" value="P:defense response to virus"/>
    <property type="evidence" value="ECO:0007669"/>
    <property type="project" value="InterPro"/>
</dbReference>
<dbReference type="GO" id="GO:0031047">
    <property type="term" value="P:regulatory ncRNA-mediated gene silencing"/>
    <property type="evidence" value="ECO:0007669"/>
    <property type="project" value="UniProtKB-KW"/>
</dbReference>
<dbReference type="CDD" id="cd12266">
    <property type="entry name" value="RRM_like_XS"/>
    <property type="match status" value="1"/>
</dbReference>
<dbReference type="Gene3D" id="3.30.70.2890">
    <property type="entry name" value="XS domain"/>
    <property type="match status" value="1"/>
</dbReference>
<dbReference type="InterPro" id="IPR044287">
    <property type="entry name" value="SGS3"/>
</dbReference>
<dbReference type="InterPro" id="IPR005380">
    <property type="entry name" value="XS_domain"/>
</dbReference>
<dbReference type="InterPro" id="IPR038588">
    <property type="entry name" value="XS_domain_sf"/>
</dbReference>
<dbReference type="InterPro" id="IPR005381">
    <property type="entry name" value="Znf-XS_domain"/>
</dbReference>
<dbReference type="PANTHER" id="PTHR46602">
    <property type="entry name" value="PROTEIN SUPPRESSOR OF GENE SILENCING 3"/>
    <property type="match status" value="1"/>
</dbReference>
<dbReference type="PANTHER" id="PTHR46602:SF1">
    <property type="entry name" value="PROTEIN SUPPRESSOR OF GENE SILENCING 3"/>
    <property type="match status" value="1"/>
</dbReference>
<dbReference type="Pfam" id="PF03468">
    <property type="entry name" value="XS"/>
    <property type="match status" value="1"/>
</dbReference>
<dbReference type="Pfam" id="PF03470">
    <property type="entry name" value="zf-XS"/>
    <property type="match status" value="1"/>
</dbReference>
<organism>
    <name type="scientific">Zea mays</name>
    <name type="common">Maize</name>
    <dbReference type="NCBI Taxonomy" id="4577"/>
    <lineage>
        <taxon>Eukaryota</taxon>
        <taxon>Viridiplantae</taxon>
        <taxon>Streptophyta</taxon>
        <taxon>Embryophyta</taxon>
        <taxon>Tracheophyta</taxon>
        <taxon>Spermatophyta</taxon>
        <taxon>Magnoliopsida</taxon>
        <taxon>Liliopsida</taxon>
        <taxon>Poales</taxon>
        <taxon>Poaceae</taxon>
        <taxon>PACMAD clade</taxon>
        <taxon>Panicoideae</taxon>
        <taxon>Andropogonodae</taxon>
        <taxon>Andropogoneae</taxon>
        <taxon>Tripsacinae</taxon>
        <taxon>Zea</taxon>
    </lineage>
</organism>
<reference key="1">
    <citation type="journal article" date="2007" name="Genes Dev.">
        <title>Two small regulatory RNAs establish opposing fates of a developmental axis.</title>
        <authorList>
            <person name="Nogueira F.T."/>
            <person name="Madi S."/>
            <person name="Chitwood D.H."/>
            <person name="Juarez M.T."/>
            <person name="Timmermans M.C.P."/>
        </authorList>
    </citation>
    <scope>NUCLEOTIDE SEQUENCE [MRNA]</scope>
    <scope>MUTAGENESIS OF CYS-196 AND HIS-230</scope>
    <scope>TISSUE SPECIFICITY</scope>
    <source>
        <strain>cv. B73</strain>
    </source>
</reference>
<reference key="2">
    <citation type="journal article" date="1998" name="Development">
        <title>Leafbladeless1 is required for dorsoventrality of lateral organs in maize.</title>
        <authorList>
            <person name="Timmermans M.C.P."/>
            <person name="Schultes N.P."/>
            <person name="Jankovsky J.P."/>
            <person name="Nelson T."/>
        </authorList>
    </citation>
    <scope>FUNCTION</scope>
</reference>
<feature type="chain" id="PRO_0000333293" description="Protein SUPPRESSOR OF GENE SILENCING 3 homolog">
    <location>
        <begin position="1"/>
        <end position="594"/>
    </location>
</feature>
<feature type="region of interest" description="Disordered" evidence="3">
    <location>
        <begin position="1"/>
        <end position="163"/>
    </location>
</feature>
<feature type="coiled-coil region" evidence="2">
    <location>
        <begin position="408"/>
        <end position="509"/>
    </location>
</feature>
<feature type="coiled-coil region" evidence="2">
    <location>
        <begin position="545"/>
        <end position="577"/>
    </location>
</feature>
<feature type="compositionally biased region" description="Polar residues" evidence="3">
    <location>
        <begin position="39"/>
        <end position="49"/>
    </location>
</feature>
<feature type="compositionally biased region" description="Acidic residues" evidence="3">
    <location>
        <begin position="136"/>
        <end position="157"/>
    </location>
</feature>
<feature type="mutagenesis site" description="In lbl1-rgd1; complete abaxalization of the leaf." evidence="4">
    <original>C</original>
    <variation>Y</variation>
    <location>
        <position position="196"/>
    </location>
</feature>
<feature type="mutagenesis site" description="In lbl1-372; complete abaxalization of the leaf." evidence="4">
    <original>H</original>
    <variation>Y</variation>
    <location>
        <position position="230"/>
    </location>
</feature>
<protein>
    <recommendedName>
        <fullName>Protein SUPPRESSOR OF GENE SILENCING 3 homolog</fullName>
    </recommendedName>
    <alternativeName>
        <fullName>Protein LEAFBLADELESS 1</fullName>
    </alternativeName>
    <alternativeName>
        <fullName>ZmSGS3</fullName>
    </alternativeName>
</protein>
<keyword id="KW-0175">Coiled coil</keyword>
<keyword id="KW-0217">Developmental protein</keyword>
<keyword id="KW-1185">Reference proteome</keyword>
<keyword id="KW-0943">RNA-mediated gene silencing</keyword>
<proteinExistence type="evidence at protein level"/>
<gene>
    <name type="primary">SGS3</name>
    <name type="synonym">LBL1</name>
</gene>
<accession>A1Y2B7</accession>
<comment type="function">
    <text evidence="1 5">Required for the biogenesis of miRNAs and trans-acting siRNAs and essential for the specification of adaxial/abaxial organ polarity. May be involved in natural virus resistance (By similarity).</text>
</comment>
<comment type="tissue specificity">
    <text evidence="4">Expressed in a dome of cells at the tip of the meristem that extends into the adaxial side of the initiating primordium. During the later stages of leaf development, expression becomes restricted to the margin and vasculature.</text>
</comment>
<comment type="similarity">
    <text evidence="6">Belongs to the SGS3 family.</text>
</comment>
<sequence length="594" mass="67753">MSGSGDRRGGGPPGSHSGWETMGKKSKKPGQAGGRQWAPWSSTNVTPNTARPAWGGSGSSHPSGTSWAQAPDHGAATRGNPRPPSQTSRPVLAPPLANGWQWQSRPRPSGSEVKKDDAPPSGSVPEVENVDGNNTSDDDDDDDDDLSDDISDDYDSDASEKSFETRKTNKWFKEFFEVLNTLSLEQINEQTRQWHCPACKNGPGAIDWYKGLQPLVSHARTKGSTRVKLHRELAALLEEELSRRGTSVLPAGEQFGKWKGLQESTDREIVWPPMVIVMNTFLEKDEDDKWKGMGNQELLDYFGEYEASKARHAYGPSGHRGMSVLIFESSAVGYMEAERLHKHFVNQGTDRNSWHLRKVRFVPGGKRQLYGFLANKEDMEAFNKHCHGKSRLKYEMRSYNEMVVIQMKQMSEDNQQLNYLKNKMVKTEQRSKAVEESLGVVTQKLRETIEENIFVRSKAKEKHMEYEEEMKSQEEIFHGLIEDIHKATEDKEKQFEKLLQEERSKARRFDVDSGTMKDRQLRKEYVQKFIDCQVKDVAEFEVERDELIKVHEDKKLKLKKEYMDLELELEKEFDAALTGLMEKHKPDTFEASSS</sequence>
<evidence type="ECO:0000250" key="1"/>
<evidence type="ECO:0000255" key="2"/>
<evidence type="ECO:0000256" key="3">
    <source>
        <dbReference type="SAM" id="MobiDB-lite"/>
    </source>
</evidence>
<evidence type="ECO:0000269" key="4">
    <source>
    </source>
</evidence>
<evidence type="ECO:0000269" key="5">
    <source>
    </source>
</evidence>
<evidence type="ECO:0000305" key="6"/>